<protein>
    <recommendedName>
        <fullName evidence="1">ATP synthase subunit delta</fullName>
    </recommendedName>
    <alternativeName>
        <fullName evidence="1">ATP synthase F(1) sector subunit delta</fullName>
    </alternativeName>
    <alternativeName>
        <fullName evidence="1">F-type ATPase subunit delta</fullName>
        <shortName evidence="1">F-ATPase subunit delta</shortName>
    </alternativeName>
</protein>
<sequence length="177" mass="19230">MSEFTTVARPYAKAAFDFAVEHQSVDRWQQMLAFAASVASNEQMTDLLSGALAPEALSETFIAICGDQLDEAGQNLIKVMAENGRLPTLTAVLEQFIQLRAAHDATAEVEVISSTTLSDEQLTKISAAMEKRLSRKVKLNCKIDKSVMAGVIIRAGDMVIDGSVRGRLERLADVLQS</sequence>
<dbReference type="EMBL" id="CU468135">
    <property type="protein sequence ID" value="CAO98524.1"/>
    <property type="molecule type" value="Genomic_DNA"/>
</dbReference>
<dbReference type="RefSeq" id="WP_012443144.1">
    <property type="nucleotide sequence ID" value="NC_010694.1"/>
</dbReference>
<dbReference type="SMR" id="B2VCA7"/>
<dbReference type="STRING" id="465817.ETA_34780"/>
<dbReference type="KEGG" id="eta:ETA_34780"/>
<dbReference type="eggNOG" id="COG0712">
    <property type="taxonomic scope" value="Bacteria"/>
</dbReference>
<dbReference type="HOGENOM" id="CLU_085114_3_0_6"/>
<dbReference type="OrthoDB" id="9816221at2"/>
<dbReference type="Proteomes" id="UP000001726">
    <property type="component" value="Chromosome"/>
</dbReference>
<dbReference type="GO" id="GO:0005886">
    <property type="term" value="C:plasma membrane"/>
    <property type="evidence" value="ECO:0007669"/>
    <property type="project" value="UniProtKB-SubCell"/>
</dbReference>
<dbReference type="GO" id="GO:0045259">
    <property type="term" value="C:proton-transporting ATP synthase complex"/>
    <property type="evidence" value="ECO:0007669"/>
    <property type="project" value="UniProtKB-KW"/>
</dbReference>
<dbReference type="GO" id="GO:0046933">
    <property type="term" value="F:proton-transporting ATP synthase activity, rotational mechanism"/>
    <property type="evidence" value="ECO:0007669"/>
    <property type="project" value="UniProtKB-UniRule"/>
</dbReference>
<dbReference type="FunFam" id="1.10.520.20:FF:000001">
    <property type="entry name" value="ATP synthase subunit delta"/>
    <property type="match status" value="1"/>
</dbReference>
<dbReference type="Gene3D" id="1.10.520.20">
    <property type="entry name" value="N-terminal domain of the delta subunit of the F1F0-ATP synthase"/>
    <property type="match status" value="1"/>
</dbReference>
<dbReference type="HAMAP" id="MF_01416">
    <property type="entry name" value="ATP_synth_delta_bact"/>
    <property type="match status" value="1"/>
</dbReference>
<dbReference type="InterPro" id="IPR026015">
    <property type="entry name" value="ATP_synth_OSCP/delta_N_sf"/>
</dbReference>
<dbReference type="InterPro" id="IPR020781">
    <property type="entry name" value="ATPase_OSCP/d_CS"/>
</dbReference>
<dbReference type="InterPro" id="IPR000711">
    <property type="entry name" value="ATPase_OSCP/dsu"/>
</dbReference>
<dbReference type="NCBIfam" id="TIGR01145">
    <property type="entry name" value="ATP_synt_delta"/>
    <property type="match status" value="1"/>
</dbReference>
<dbReference type="NCBIfam" id="NF004402">
    <property type="entry name" value="PRK05758.2-2"/>
    <property type="match status" value="1"/>
</dbReference>
<dbReference type="NCBIfam" id="NF004404">
    <property type="entry name" value="PRK05758.2-5"/>
    <property type="match status" value="1"/>
</dbReference>
<dbReference type="PANTHER" id="PTHR11910">
    <property type="entry name" value="ATP SYNTHASE DELTA CHAIN"/>
    <property type="match status" value="1"/>
</dbReference>
<dbReference type="Pfam" id="PF00213">
    <property type="entry name" value="OSCP"/>
    <property type="match status" value="1"/>
</dbReference>
<dbReference type="PRINTS" id="PR00125">
    <property type="entry name" value="ATPASEDELTA"/>
</dbReference>
<dbReference type="SUPFAM" id="SSF47928">
    <property type="entry name" value="N-terminal domain of the delta subunit of the F1F0-ATP synthase"/>
    <property type="match status" value="1"/>
</dbReference>
<dbReference type="PROSITE" id="PS00389">
    <property type="entry name" value="ATPASE_DELTA"/>
    <property type="match status" value="1"/>
</dbReference>
<reference key="1">
    <citation type="journal article" date="2008" name="Environ. Microbiol.">
        <title>The genome of Erwinia tasmaniensis strain Et1/99, a non-pathogenic bacterium in the genus Erwinia.</title>
        <authorList>
            <person name="Kube M."/>
            <person name="Migdoll A.M."/>
            <person name="Mueller I."/>
            <person name="Kuhl H."/>
            <person name="Beck A."/>
            <person name="Reinhardt R."/>
            <person name="Geider K."/>
        </authorList>
    </citation>
    <scope>NUCLEOTIDE SEQUENCE [LARGE SCALE GENOMIC DNA]</scope>
    <source>
        <strain>DSM 17950 / CFBP 7177 / CIP 109463 / NCPPB 4357 / Et1/99</strain>
    </source>
</reference>
<name>ATPD_ERWT9</name>
<evidence type="ECO:0000255" key="1">
    <source>
        <dbReference type="HAMAP-Rule" id="MF_01416"/>
    </source>
</evidence>
<feature type="chain" id="PRO_1000184709" description="ATP synthase subunit delta">
    <location>
        <begin position="1"/>
        <end position="177"/>
    </location>
</feature>
<proteinExistence type="inferred from homology"/>
<accession>B2VCA7</accession>
<comment type="function">
    <text evidence="1">F(1)F(0) ATP synthase produces ATP from ADP in the presence of a proton or sodium gradient. F-type ATPases consist of two structural domains, F(1) containing the extramembraneous catalytic core and F(0) containing the membrane proton channel, linked together by a central stalk and a peripheral stalk. During catalysis, ATP synthesis in the catalytic domain of F(1) is coupled via a rotary mechanism of the central stalk subunits to proton translocation.</text>
</comment>
<comment type="function">
    <text evidence="1">This protein is part of the stalk that links CF(0) to CF(1). It either transmits conformational changes from CF(0) to CF(1) or is implicated in proton conduction.</text>
</comment>
<comment type="subunit">
    <text evidence="1">F-type ATPases have 2 components, F(1) - the catalytic core - and F(0) - the membrane proton channel. F(1) has five subunits: alpha(3), beta(3), gamma(1), delta(1), epsilon(1). F(0) has three main subunits: a(1), b(2) and c(10-14). The alpha and beta chains form an alternating ring which encloses part of the gamma chain. F(1) is attached to F(0) by a central stalk formed by the gamma and epsilon chains, while a peripheral stalk is formed by the delta and b chains.</text>
</comment>
<comment type="subcellular location">
    <subcellularLocation>
        <location evidence="1">Cell inner membrane</location>
        <topology evidence="1">Peripheral membrane protein</topology>
    </subcellularLocation>
</comment>
<comment type="similarity">
    <text evidence="1">Belongs to the ATPase delta chain family.</text>
</comment>
<gene>
    <name evidence="1" type="primary">atpH</name>
    <name type="ordered locus">ETA_34780</name>
</gene>
<organism>
    <name type="scientific">Erwinia tasmaniensis (strain DSM 17950 / CFBP 7177 / CIP 109463 / NCPPB 4357 / Et1/99)</name>
    <dbReference type="NCBI Taxonomy" id="465817"/>
    <lineage>
        <taxon>Bacteria</taxon>
        <taxon>Pseudomonadati</taxon>
        <taxon>Pseudomonadota</taxon>
        <taxon>Gammaproteobacteria</taxon>
        <taxon>Enterobacterales</taxon>
        <taxon>Erwiniaceae</taxon>
        <taxon>Erwinia</taxon>
    </lineage>
</organism>
<keyword id="KW-0066">ATP synthesis</keyword>
<keyword id="KW-0997">Cell inner membrane</keyword>
<keyword id="KW-1003">Cell membrane</keyword>
<keyword id="KW-0139">CF(1)</keyword>
<keyword id="KW-0375">Hydrogen ion transport</keyword>
<keyword id="KW-0406">Ion transport</keyword>
<keyword id="KW-0472">Membrane</keyword>
<keyword id="KW-1185">Reference proteome</keyword>
<keyword id="KW-0813">Transport</keyword>